<name>SDA1_SCHPO</name>
<proteinExistence type="inferred from homology"/>
<dbReference type="EMBL" id="CU329671">
    <property type="protein sequence ID" value="CAB53730.1"/>
    <property type="molecule type" value="Genomic_DNA"/>
</dbReference>
<dbReference type="PIR" id="T39271">
    <property type="entry name" value="T39271"/>
</dbReference>
<dbReference type="RefSeq" id="NP_595163.1">
    <property type="nucleotide sequence ID" value="NM_001021072.2"/>
</dbReference>
<dbReference type="SMR" id="Q10342"/>
<dbReference type="BioGRID" id="276435">
    <property type="interactions" value="4"/>
</dbReference>
<dbReference type="FunCoup" id="Q10342">
    <property type="interactions" value="645"/>
</dbReference>
<dbReference type="STRING" id="284812.Q10342"/>
<dbReference type="iPTMnet" id="Q10342"/>
<dbReference type="PaxDb" id="4896-SPBC106.14c.1"/>
<dbReference type="EnsemblFungi" id="SPBC106.14c.1">
    <property type="protein sequence ID" value="SPBC106.14c.1:pep"/>
    <property type="gene ID" value="SPBC106.14c"/>
</dbReference>
<dbReference type="GeneID" id="2539889"/>
<dbReference type="KEGG" id="spo:2539889"/>
<dbReference type="PomBase" id="SPBC106.14c">
    <property type="gene designation" value="sda1"/>
</dbReference>
<dbReference type="VEuPathDB" id="FungiDB:SPBC106.14c"/>
<dbReference type="eggNOG" id="KOG2229">
    <property type="taxonomic scope" value="Eukaryota"/>
</dbReference>
<dbReference type="HOGENOM" id="CLU_009161_2_1_1"/>
<dbReference type="InParanoid" id="Q10342"/>
<dbReference type="OMA" id="AMYKTYK"/>
<dbReference type="PhylomeDB" id="Q10342"/>
<dbReference type="PRO" id="PR:Q10342"/>
<dbReference type="Proteomes" id="UP000002485">
    <property type="component" value="Chromosome II"/>
</dbReference>
<dbReference type="GO" id="GO:0005730">
    <property type="term" value="C:nucleolus"/>
    <property type="evidence" value="ECO:0007005"/>
    <property type="project" value="PomBase"/>
</dbReference>
<dbReference type="GO" id="GO:0005634">
    <property type="term" value="C:nucleus"/>
    <property type="evidence" value="ECO:0007005"/>
    <property type="project" value="PomBase"/>
</dbReference>
<dbReference type="GO" id="GO:0015031">
    <property type="term" value="P:protein transport"/>
    <property type="evidence" value="ECO:0007669"/>
    <property type="project" value="UniProtKB-KW"/>
</dbReference>
<dbReference type="GO" id="GO:0042273">
    <property type="term" value="P:ribosomal large subunit biogenesis"/>
    <property type="evidence" value="ECO:0000318"/>
    <property type="project" value="GO_Central"/>
</dbReference>
<dbReference type="GO" id="GO:0000055">
    <property type="term" value="P:ribosomal large subunit export from nucleus"/>
    <property type="evidence" value="ECO:0000318"/>
    <property type="project" value="GO_Central"/>
</dbReference>
<dbReference type="InterPro" id="IPR027312">
    <property type="entry name" value="Sda1"/>
</dbReference>
<dbReference type="InterPro" id="IPR048292">
    <property type="entry name" value="SDA1_C"/>
</dbReference>
<dbReference type="InterPro" id="IPR007949">
    <property type="entry name" value="SDA1_MD"/>
</dbReference>
<dbReference type="InterPro" id="IPR012977">
    <property type="entry name" value="SDA1_N"/>
</dbReference>
<dbReference type="PANTHER" id="PTHR12730">
    <property type="entry name" value="HSDA/SDA1-RELATED"/>
    <property type="match status" value="1"/>
</dbReference>
<dbReference type="PANTHER" id="PTHR12730:SF0">
    <property type="entry name" value="PROTEIN SDA1 HOMOLOG"/>
    <property type="match status" value="1"/>
</dbReference>
<dbReference type="Pfam" id="PF21638">
    <property type="entry name" value="SDA1_C"/>
    <property type="match status" value="1"/>
</dbReference>
<dbReference type="Pfam" id="PF05285">
    <property type="entry name" value="SDA1_dom"/>
    <property type="match status" value="1"/>
</dbReference>
<dbReference type="Pfam" id="PF08158">
    <property type="entry name" value="SDA1_HEAT"/>
    <property type="match status" value="2"/>
</dbReference>
<sequence>MVKRRTAAVLPNNLPHLQHLVKKDPKSYREEFLQQWNHYETAREIFLVNPSSDISEFCSLIDFISQTCNYYHDVTADFPSELIELLQKNHTIFPFELCEKIVLCLVLLKNKTVISPITLLQCFFPLFRENPTRGVRELLYQQVSLTIRNANKQAKNDKLNKAVQSALFTLVDGSGSGSATHTDYSGQKREYSASELSGVWAVKMVRDLWKRNVWSGDARAVNIMKSAALSSNPKVMLAGIYFFLGADNQEEEEESDDEGPDVSKLLHQANVNKKTKSREAALLRARAVVKKKERGKQNVPTNVNFPALQLLHDPQGFAEELFEKHLASSKSRLSMDQKLVVLRLLTRLVGSHKLTVLGLYSFLMKYLTPHQRDVTQFLACLAQASHEFVPPDALEPLVRKIADEFVTSGVANEVVCAGINAIREVCARAPLAMTPDLLQDLTEYKSSKDKGVMMASRSLITLYREVAPDMLKRKDRGKLASIEMKDRTPLKYGEELNVTHGIQGLELLAQYKAEHGEEGENGDDWDNWEVSEDGQNSDDSGGWIDVDSDDNIELSDSDEEEEKATARKESDEKGSSSQKELVDRMTELASQSILTPNDLKKLEELREQAGVDRLVNGPKRSLKRPDDAVEADEIEGPRKKAKNDREARIASVMEGREGRDKFSSKKAGFNPTSLSNKRKQRNKNFMMIKHKLKGKAGRSLVQKQKVLREHVAREKRKIK</sequence>
<feature type="chain" id="PRO_0000116515" description="Protein sda1">
    <location>
        <begin position="1"/>
        <end position="719"/>
    </location>
</feature>
<feature type="region of interest" description="Disordered" evidence="2">
    <location>
        <begin position="515"/>
        <end position="583"/>
    </location>
</feature>
<feature type="region of interest" description="Disordered" evidence="2">
    <location>
        <begin position="614"/>
        <end position="682"/>
    </location>
</feature>
<feature type="compositionally biased region" description="Acidic residues" evidence="2">
    <location>
        <begin position="519"/>
        <end position="536"/>
    </location>
</feature>
<feature type="compositionally biased region" description="Acidic residues" evidence="2">
    <location>
        <begin position="546"/>
        <end position="562"/>
    </location>
</feature>
<feature type="compositionally biased region" description="Basic and acidic residues" evidence="2">
    <location>
        <begin position="563"/>
        <end position="583"/>
    </location>
</feature>
<feature type="compositionally biased region" description="Basic and acidic residues" evidence="2">
    <location>
        <begin position="635"/>
        <end position="663"/>
    </location>
</feature>
<accession>Q10342</accession>
<accession>Q9URU8</accession>
<protein>
    <recommendedName>
        <fullName>Protein sda1</fullName>
    </recommendedName>
</protein>
<evidence type="ECO:0000250" key="1"/>
<evidence type="ECO:0000256" key="2">
    <source>
        <dbReference type="SAM" id="MobiDB-lite"/>
    </source>
</evidence>
<evidence type="ECO:0000305" key="3"/>
<comment type="function">
    <text evidence="1">Required for 60S pre-ribosomal subunits export to the cytoplasm. May also be required for 60S ribosomal subunit maturation and accumulation (By similarity).</text>
</comment>
<comment type="subcellular location">
    <subcellularLocation>
        <location evidence="1">Nucleus</location>
        <location evidence="1">Nucleolus</location>
    </subcellularLocation>
</comment>
<comment type="similarity">
    <text evidence="3">Belongs to the SDA1 family.</text>
</comment>
<keyword id="KW-0539">Nucleus</keyword>
<keyword id="KW-0653">Protein transport</keyword>
<keyword id="KW-1185">Reference proteome</keyword>
<keyword id="KW-0690">Ribosome biogenesis</keyword>
<keyword id="KW-0813">Transport</keyword>
<gene>
    <name type="primary">sda1</name>
    <name type="ORF">SPBC106.14c</name>
</gene>
<reference key="1">
    <citation type="journal article" date="2002" name="Nature">
        <title>The genome sequence of Schizosaccharomyces pombe.</title>
        <authorList>
            <person name="Wood V."/>
            <person name="Gwilliam R."/>
            <person name="Rajandream M.A."/>
            <person name="Lyne M.H."/>
            <person name="Lyne R."/>
            <person name="Stewart A."/>
            <person name="Sgouros J.G."/>
            <person name="Peat N."/>
            <person name="Hayles J."/>
            <person name="Baker S.G."/>
            <person name="Basham D."/>
            <person name="Bowman S."/>
            <person name="Brooks K."/>
            <person name="Brown D."/>
            <person name="Brown S."/>
            <person name="Chillingworth T."/>
            <person name="Churcher C.M."/>
            <person name="Collins M."/>
            <person name="Connor R."/>
            <person name="Cronin A."/>
            <person name="Davis P."/>
            <person name="Feltwell T."/>
            <person name="Fraser A."/>
            <person name="Gentles S."/>
            <person name="Goble A."/>
            <person name="Hamlin N."/>
            <person name="Harris D.E."/>
            <person name="Hidalgo J."/>
            <person name="Hodgson G."/>
            <person name="Holroyd S."/>
            <person name="Hornsby T."/>
            <person name="Howarth S."/>
            <person name="Huckle E.J."/>
            <person name="Hunt S."/>
            <person name="Jagels K."/>
            <person name="James K.D."/>
            <person name="Jones L."/>
            <person name="Jones M."/>
            <person name="Leather S."/>
            <person name="McDonald S."/>
            <person name="McLean J."/>
            <person name="Mooney P."/>
            <person name="Moule S."/>
            <person name="Mungall K.L."/>
            <person name="Murphy L.D."/>
            <person name="Niblett D."/>
            <person name="Odell C."/>
            <person name="Oliver K."/>
            <person name="O'Neil S."/>
            <person name="Pearson D."/>
            <person name="Quail M.A."/>
            <person name="Rabbinowitsch E."/>
            <person name="Rutherford K.M."/>
            <person name="Rutter S."/>
            <person name="Saunders D."/>
            <person name="Seeger K."/>
            <person name="Sharp S."/>
            <person name="Skelton J."/>
            <person name="Simmonds M.N."/>
            <person name="Squares R."/>
            <person name="Squares S."/>
            <person name="Stevens K."/>
            <person name="Taylor K."/>
            <person name="Taylor R.G."/>
            <person name="Tivey A."/>
            <person name="Walsh S.V."/>
            <person name="Warren T."/>
            <person name="Whitehead S."/>
            <person name="Woodward J.R."/>
            <person name="Volckaert G."/>
            <person name="Aert R."/>
            <person name="Robben J."/>
            <person name="Grymonprez B."/>
            <person name="Weltjens I."/>
            <person name="Vanstreels E."/>
            <person name="Rieger M."/>
            <person name="Schaefer M."/>
            <person name="Mueller-Auer S."/>
            <person name="Gabel C."/>
            <person name="Fuchs M."/>
            <person name="Duesterhoeft A."/>
            <person name="Fritzc C."/>
            <person name="Holzer E."/>
            <person name="Moestl D."/>
            <person name="Hilbert H."/>
            <person name="Borzym K."/>
            <person name="Langer I."/>
            <person name="Beck A."/>
            <person name="Lehrach H."/>
            <person name="Reinhardt R."/>
            <person name="Pohl T.M."/>
            <person name="Eger P."/>
            <person name="Zimmermann W."/>
            <person name="Wedler H."/>
            <person name="Wambutt R."/>
            <person name="Purnelle B."/>
            <person name="Goffeau A."/>
            <person name="Cadieu E."/>
            <person name="Dreano S."/>
            <person name="Gloux S."/>
            <person name="Lelaure V."/>
            <person name="Mottier S."/>
            <person name="Galibert F."/>
            <person name="Aves S.J."/>
            <person name="Xiang Z."/>
            <person name="Hunt C."/>
            <person name="Moore K."/>
            <person name="Hurst S.M."/>
            <person name="Lucas M."/>
            <person name="Rochet M."/>
            <person name="Gaillardin C."/>
            <person name="Tallada V.A."/>
            <person name="Garzon A."/>
            <person name="Thode G."/>
            <person name="Daga R.R."/>
            <person name="Cruzado L."/>
            <person name="Jimenez J."/>
            <person name="Sanchez M."/>
            <person name="del Rey F."/>
            <person name="Benito J."/>
            <person name="Dominguez A."/>
            <person name="Revuelta J.L."/>
            <person name="Moreno S."/>
            <person name="Armstrong J."/>
            <person name="Forsburg S.L."/>
            <person name="Cerutti L."/>
            <person name="Lowe T."/>
            <person name="McCombie W.R."/>
            <person name="Paulsen I."/>
            <person name="Potashkin J."/>
            <person name="Shpakovski G.V."/>
            <person name="Ussery D."/>
            <person name="Barrell B.G."/>
            <person name="Nurse P."/>
        </authorList>
    </citation>
    <scope>NUCLEOTIDE SEQUENCE [LARGE SCALE GENOMIC DNA]</scope>
    <source>
        <strain>972 / ATCC 24843</strain>
    </source>
</reference>
<organism>
    <name type="scientific">Schizosaccharomyces pombe (strain 972 / ATCC 24843)</name>
    <name type="common">Fission yeast</name>
    <dbReference type="NCBI Taxonomy" id="284812"/>
    <lineage>
        <taxon>Eukaryota</taxon>
        <taxon>Fungi</taxon>
        <taxon>Dikarya</taxon>
        <taxon>Ascomycota</taxon>
        <taxon>Taphrinomycotina</taxon>
        <taxon>Schizosaccharomycetes</taxon>
        <taxon>Schizosaccharomycetales</taxon>
        <taxon>Schizosaccharomycetaceae</taxon>
        <taxon>Schizosaccharomyces</taxon>
    </lineage>
</organism>